<evidence type="ECO:0000255" key="1">
    <source>
        <dbReference type="HAMAP-Rule" id="MF_00624"/>
    </source>
</evidence>
<comment type="function">
    <text evidence="1">Involved in the biosynthesis of ADP-glucose, a building block required for the elongation reactions to produce glycogen. Catalyzes the reaction between ATP and alpha-D-glucose 1-phosphate (G1P) to produce pyrophosphate and ADP-Glc.</text>
</comment>
<comment type="catalytic activity">
    <reaction evidence="1">
        <text>alpha-D-glucose 1-phosphate + ATP + H(+) = ADP-alpha-D-glucose + diphosphate</text>
        <dbReference type="Rhea" id="RHEA:12120"/>
        <dbReference type="ChEBI" id="CHEBI:15378"/>
        <dbReference type="ChEBI" id="CHEBI:30616"/>
        <dbReference type="ChEBI" id="CHEBI:33019"/>
        <dbReference type="ChEBI" id="CHEBI:57498"/>
        <dbReference type="ChEBI" id="CHEBI:58601"/>
        <dbReference type="EC" id="2.7.7.27"/>
    </reaction>
</comment>
<comment type="pathway">
    <text evidence="1">Glycan biosynthesis; glycogen biosynthesis.</text>
</comment>
<comment type="subunit">
    <text evidence="1">Homotetramer.</text>
</comment>
<comment type="similarity">
    <text evidence="1">Belongs to the bacterial/plant glucose-1-phosphate adenylyltransferase family.</text>
</comment>
<organism>
    <name type="scientific">Vibrio parahaemolyticus serotype O3:K6 (strain RIMD 2210633)</name>
    <dbReference type="NCBI Taxonomy" id="223926"/>
    <lineage>
        <taxon>Bacteria</taxon>
        <taxon>Pseudomonadati</taxon>
        <taxon>Pseudomonadota</taxon>
        <taxon>Gammaproteobacteria</taxon>
        <taxon>Vibrionales</taxon>
        <taxon>Vibrionaceae</taxon>
        <taxon>Vibrio</taxon>
    </lineage>
</organism>
<proteinExistence type="inferred from homology"/>
<sequence>MAGVLGMILAGGEGSRLRPLTESRSKPSVPFGGSYRLIDFALNNFVNADLMRIYVLTQFKSQSLFHHLKKGWNINGITDRFIDPIPAQMRTGKRWYEGTADAIYQNLRFMELEEPDQVCIFGSDHIYKMDIKQMLNFHTEKKASLTVSALRMPLKEASQFGVIEVDAEGRMIGFEEKPANPKSIPGEPDFALVSMGNYVFEAQVLFSELVEDADNEASSHDFGKDIIPKMFPRGDVFVYDFSTNRISGEKEEVYWRDVGTIDAYWQAHMDLLEKDAPFSLYNRKWPLHTYYPPLPPATFTDSDNGRVQIIDSLVCNGSYVRGSRIEKSVLGFRSNIASACDISECILLGDVKIGEGCVLRRVIVDKDADIAPGTQIGVNLQEDKKHFHVSEEGIVVIPKGARVGY</sequence>
<reference key="1">
    <citation type="journal article" date="2003" name="Lancet">
        <title>Genome sequence of Vibrio parahaemolyticus: a pathogenic mechanism distinct from that of V. cholerae.</title>
        <authorList>
            <person name="Makino K."/>
            <person name="Oshima K."/>
            <person name="Kurokawa K."/>
            <person name="Yokoyama K."/>
            <person name="Uda T."/>
            <person name="Tagomori K."/>
            <person name="Iijima Y."/>
            <person name="Najima M."/>
            <person name="Nakano M."/>
            <person name="Yamashita A."/>
            <person name="Kubota Y."/>
            <person name="Kimura S."/>
            <person name="Yasunaga T."/>
            <person name="Honda T."/>
            <person name="Shinagawa H."/>
            <person name="Hattori M."/>
            <person name="Iida T."/>
        </authorList>
    </citation>
    <scope>NUCLEOTIDE SEQUENCE [LARGE SCALE GENOMIC DNA]</scope>
    <source>
        <strain>RIMD 2210633</strain>
    </source>
</reference>
<feature type="chain" id="PRO_0000195346" description="Glucose-1-phosphate adenylyltransferase 1">
    <location>
        <begin position="1"/>
        <end position="405"/>
    </location>
</feature>
<feature type="binding site" evidence="1">
    <location>
        <position position="96"/>
    </location>
    <ligand>
        <name>alpha-D-glucose 1-phosphate</name>
        <dbReference type="ChEBI" id="CHEBI:58601"/>
    </ligand>
</feature>
<feature type="binding site" evidence="1">
    <location>
        <position position="161"/>
    </location>
    <ligand>
        <name>alpha-D-glucose 1-phosphate</name>
        <dbReference type="ChEBI" id="CHEBI:58601"/>
    </ligand>
</feature>
<feature type="binding site" evidence="1">
    <location>
        <begin position="176"/>
        <end position="177"/>
    </location>
    <ligand>
        <name>alpha-D-glucose 1-phosphate</name>
        <dbReference type="ChEBI" id="CHEBI:58601"/>
    </ligand>
</feature>
<feature type="binding site" evidence="1">
    <location>
        <position position="194"/>
    </location>
    <ligand>
        <name>alpha-D-glucose 1-phosphate</name>
        <dbReference type="ChEBI" id="CHEBI:58601"/>
    </ligand>
</feature>
<gene>
    <name evidence="1" type="primary">glgC1</name>
    <name type="ordered locus">VP1023</name>
</gene>
<accession>Q87QX6</accession>
<dbReference type="EC" id="2.7.7.27" evidence="1"/>
<dbReference type="EMBL" id="BA000031">
    <property type="protein sequence ID" value="BAC59286.1"/>
    <property type="molecule type" value="Genomic_DNA"/>
</dbReference>
<dbReference type="RefSeq" id="NP_797402.1">
    <property type="nucleotide sequence ID" value="NC_004603.1"/>
</dbReference>
<dbReference type="SMR" id="Q87QX6"/>
<dbReference type="GeneID" id="1188527"/>
<dbReference type="KEGG" id="vpa:VP1023"/>
<dbReference type="PATRIC" id="fig|223926.6.peg.970"/>
<dbReference type="eggNOG" id="COG0448">
    <property type="taxonomic scope" value="Bacteria"/>
</dbReference>
<dbReference type="HOGENOM" id="CLU_029499_14_1_6"/>
<dbReference type="UniPathway" id="UPA00164"/>
<dbReference type="Proteomes" id="UP000002493">
    <property type="component" value="Chromosome 1"/>
</dbReference>
<dbReference type="GO" id="GO:0005524">
    <property type="term" value="F:ATP binding"/>
    <property type="evidence" value="ECO:0007669"/>
    <property type="project" value="UniProtKB-KW"/>
</dbReference>
<dbReference type="GO" id="GO:0008878">
    <property type="term" value="F:glucose-1-phosphate adenylyltransferase activity"/>
    <property type="evidence" value="ECO:0007669"/>
    <property type="project" value="UniProtKB-UniRule"/>
</dbReference>
<dbReference type="GO" id="GO:0005978">
    <property type="term" value="P:glycogen biosynthetic process"/>
    <property type="evidence" value="ECO:0007669"/>
    <property type="project" value="UniProtKB-UniRule"/>
</dbReference>
<dbReference type="CDD" id="cd02508">
    <property type="entry name" value="ADP_Glucose_PP"/>
    <property type="match status" value="1"/>
</dbReference>
<dbReference type="CDD" id="cd04651">
    <property type="entry name" value="LbH_G1P_AT_C"/>
    <property type="match status" value="1"/>
</dbReference>
<dbReference type="Gene3D" id="2.160.10.10">
    <property type="entry name" value="Hexapeptide repeat proteins"/>
    <property type="match status" value="1"/>
</dbReference>
<dbReference type="Gene3D" id="3.90.550.10">
    <property type="entry name" value="Spore Coat Polysaccharide Biosynthesis Protein SpsA, Chain A"/>
    <property type="match status" value="1"/>
</dbReference>
<dbReference type="HAMAP" id="MF_00624">
    <property type="entry name" value="GlgC"/>
    <property type="match status" value="1"/>
</dbReference>
<dbReference type="InterPro" id="IPR011831">
    <property type="entry name" value="ADP-Glc_PPase"/>
</dbReference>
<dbReference type="InterPro" id="IPR005836">
    <property type="entry name" value="ADP_Glu_pyroP_CS"/>
</dbReference>
<dbReference type="InterPro" id="IPR023049">
    <property type="entry name" value="GlgC_bac"/>
</dbReference>
<dbReference type="InterPro" id="IPR056818">
    <property type="entry name" value="GlmU/GlgC-like_hexapep"/>
</dbReference>
<dbReference type="InterPro" id="IPR005835">
    <property type="entry name" value="NTP_transferase_dom"/>
</dbReference>
<dbReference type="InterPro" id="IPR029044">
    <property type="entry name" value="Nucleotide-diphossugar_trans"/>
</dbReference>
<dbReference type="InterPro" id="IPR011004">
    <property type="entry name" value="Trimer_LpxA-like_sf"/>
</dbReference>
<dbReference type="NCBIfam" id="TIGR02091">
    <property type="entry name" value="glgC"/>
    <property type="match status" value="1"/>
</dbReference>
<dbReference type="NCBIfam" id="NF001947">
    <property type="entry name" value="PRK00725.1"/>
    <property type="match status" value="1"/>
</dbReference>
<dbReference type="NCBIfam" id="NF002023">
    <property type="entry name" value="PRK00844.1"/>
    <property type="match status" value="1"/>
</dbReference>
<dbReference type="PANTHER" id="PTHR43523:SF2">
    <property type="entry name" value="GLUCOSE-1-PHOSPHATE ADENYLYLTRANSFERASE"/>
    <property type="match status" value="1"/>
</dbReference>
<dbReference type="PANTHER" id="PTHR43523">
    <property type="entry name" value="GLUCOSE-1-PHOSPHATE ADENYLYLTRANSFERASE-RELATED"/>
    <property type="match status" value="1"/>
</dbReference>
<dbReference type="Pfam" id="PF24894">
    <property type="entry name" value="Hexapep_GlmU"/>
    <property type="match status" value="1"/>
</dbReference>
<dbReference type="Pfam" id="PF00483">
    <property type="entry name" value="NTP_transferase"/>
    <property type="match status" value="1"/>
</dbReference>
<dbReference type="SUPFAM" id="SSF53448">
    <property type="entry name" value="Nucleotide-diphospho-sugar transferases"/>
    <property type="match status" value="1"/>
</dbReference>
<dbReference type="SUPFAM" id="SSF51161">
    <property type="entry name" value="Trimeric LpxA-like enzymes"/>
    <property type="match status" value="1"/>
</dbReference>
<dbReference type="PROSITE" id="PS00808">
    <property type="entry name" value="ADP_GLC_PYROPHOSPH_1"/>
    <property type="match status" value="1"/>
</dbReference>
<dbReference type="PROSITE" id="PS00809">
    <property type="entry name" value="ADP_GLC_PYROPHOSPH_2"/>
    <property type="match status" value="1"/>
</dbReference>
<dbReference type="PROSITE" id="PS00810">
    <property type="entry name" value="ADP_GLC_PYROPHOSPH_3"/>
    <property type="match status" value="1"/>
</dbReference>
<keyword id="KW-0067">ATP-binding</keyword>
<keyword id="KW-0119">Carbohydrate metabolism</keyword>
<keyword id="KW-0320">Glycogen biosynthesis</keyword>
<keyword id="KW-0321">Glycogen metabolism</keyword>
<keyword id="KW-0547">Nucleotide-binding</keyword>
<keyword id="KW-0548">Nucleotidyltransferase</keyword>
<keyword id="KW-0808">Transferase</keyword>
<protein>
    <recommendedName>
        <fullName evidence="1">Glucose-1-phosphate adenylyltransferase 1</fullName>
        <ecNumber evidence="1">2.7.7.27</ecNumber>
    </recommendedName>
    <alternativeName>
        <fullName evidence="1">ADP-glucose pyrophosphorylase 1</fullName>
        <shortName evidence="1">ADPGlc PPase 1</shortName>
    </alternativeName>
    <alternativeName>
        <fullName evidence="1">ADP-glucose synthase 1</fullName>
    </alternativeName>
</protein>
<name>GLGC1_VIBPA</name>